<organism>
    <name type="scientific">Kluyveromyces lactis (strain ATCC 8585 / CBS 2359 / DSM 70799 / NBRC 1267 / NRRL Y-1140 / WM37)</name>
    <name type="common">Yeast</name>
    <name type="synonym">Candida sphaerica</name>
    <dbReference type="NCBI Taxonomy" id="284590"/>
    <lineage>
        <taxon>Eukaryota</taxon>
        <taxon>Fungi</taxon>
        <taxon>Dikarya</taxon>
        <taxon>Ascomycota</taxon>
        <taxon>Saccharomycotina</taxon>
        <taxon>Saccharomycetes</taxon>
        <taxon>Saccharomycetales</taxon>
        <taxon>Saccharomycetaceae</taxon>
        <taxon>Kluyveromyces</taxon>
    </lineage>
</organism>
<sequence length="370" mass="41470">MLKPGIRSVQKRFITETVVRSTQPSVSRRRKTTHFTDKLNKGPSFEDFVNGNAQKFTLDPLEKARQNSEEVQRLPTWLKVPIAKGSNFHKLKNDVKELKLSTVCEEAKCPNIGECWGGGDKSKATATIMLLGDTCTRGCRFCSVKTNRKPSAPDPTEPENTAEAISRWGLGYVVLTTVDRDDLVDGGAYHLAETVQKIKQKAPNILVETLSGDFRGDLEMVKVMALSGLDVYAHNMETVEALTPHVRDRRATYRQSLSVLECAKKTVPTLVTKTSVMLGLGETDEQVLQTMKDLRAIGCDVITFGQYMRPTKRHMKVVEYVTPEKFDYWKQKALELGFLYCASGPLVRSSYKAGESFIENVLRGRSRARI</sequence>
<keyword id="KW-0004">4Fe-4S</keyword>
<keyword id="KW-0408">Iron</keyword>
<keyword id="KW-0411">Iron-sulfur</keyword>
<keyword id="KW-0479">Metal-binding</keyword>
<keyword id="KW-0496">Mitochondrion</keyword>
<keyword id="KW-1185">Reference proteome</keyword>
<keyword id="KW-0949">S-adenosyl-L-methionine</keyword>
<keyword id="KW-0808">Transferase</keyword>
<comment type="function">
    <text evidence="1">Catalyzes the radical-mediated insertion of two sulfur atoms into the C-6 and C-8 positions of the octanoyl moiety bound to the lipoyl domains of lipoate-dependent enzymes, thereby converting the octanoylated domains into lipoylated derivatives.</text>
</comment>
<comment type="catalytic activity">
    <reaction evidence="1">
        <text>[[Fe-S] cluster scaffold protein carrying a second [4Fe-4S](2+) cluster] + N(6)-octanoyl-L-lysyl-[protein] + 2 oxidized [2Fe-2S]-[ferredoxin] + 2 S-adenosyl-L-methionine + 4 H(+) = [[Fe-S] cluster scaffold protein] + N(6)-[(R)-dihydrolipoyl]-L-lysyl-[protein] + 4 Fe(3+) + 2 hydrogen sulfide + 2 5'-deoxyadenosine + 2 L-methionine + 2 reduced [2Fe-2S]-[ferredoxin]</text>
        <dbReference type="Rhea" id="RHEA:16585"/>
        <dbReference type="Rhea" id="RHEA-COMP:9928"/>
        <dbReference type="Rhea" id="RHEA-COMP:10000"/>
        <dbReference type="Rhea" id="RHEA-COMP:10001"/>
        <dbReference type="Rhea" id="RHEA-COMP:10475"/>
        <dbReference type="Rhea" id="RHEA-COMP:14568"/>
        <dbReference type="Rhea" id="RHEA-COMP:14569"/>
        <dbReference type="ChEBI" id="CHEBI:15378"/>
        <dbReference type="ChEBI" id="CHEBI:17319"/>
        <dbReference type="ChEBI" id="CHEBI:29034"/>
        <dbReference type="ChEBI" id="CHEBI:29919"/>
        <dbReference type="ChEBI" id="CHEBI:33722"/>
        <dbReference type="ChEBI" id="CHEBI:33737"/>
        <dbReference type="ChEBI" id="CHEBI:33738"/>
        <dbReference type="ChEBI" id="CHEBI:57844"/>
        <dbReference type="ChEBI" id="CHEBI:59789"/>
        <dbReference type="ChEBI" id="CHEBI:78809"/>
        <dbReference type="ChEBI" id="CHEBI:83100"/>
        <dbReference type="EC" id="2.8.1.8"/>
    </reaction>
</comment>
<comment type="cofactor">
    <cofactor evidence="1">
        <name>[4Fe-4S] cluster</name>
        <dbReference type="ChEBI" id="CHEBI:49883"/>
    </cofactor>
    <text evidence="1">Binds 2 [4Fe-4S] clusters per subunit. One cluster is coordinated with 3 cysteines and an exchangeable S-adenosyl-L-methionine.</text>
</comment>
<comment type="pathway">
    <text evidence="1">Protein modification; protein lipoylation via endogenous pathway; protein N(6)-(lipoyl)lysine from octanoyl-[acyl-carrier-protein]: step 2/2.</text>
</comment>
<comment type="subcellular location">
    <subcellularLocation>
        <location evidence="1">Mitochondrion</location>
    </subcellularLocation>
</comment>
<comment type="miscellaneous">
    <text evidence="1">This protein may be expected to contain an N-terminal transit peptide but none has been predicted.</text>
</comment>
<comment type="similarity">
    <text evidence="1">Belongs to the radical SAM superfamily. Lipoyl synthase family.</text>
</comment>
<evidence type="ECO:0000255" key="1">
    <source>
        <dbReference type="HAMAP-Rule" id="MF_03123"/>
    </source>
</evidence>
<evidence type="ECO:0000255" key="2">
    <source>
        <dbReference type="PROSITE-ProRule" id="PRU01266"/>
    </source>
</evidence>
<feature type="chain" id="PRO_0000398268" description="Lipoyl synthase, mitochondrial">
    <location>
        <begin position="1"/>
        <end position="370"/>
    </location>
</feature>
<feature type="domain" description="Radical SAM core" evidence="2">
    <location>
        <begin position="118"/>
        <end position="339"/>
    </location>
</feature>
<feature type="binding site" evidence="1">
    <location>
        <position position="104"/>
    </location>
    <ligand>
        <name>[4Fe-4S] cluster</name>
        <dbReference type="ChEBI" id="CHEBI:49883"/>
        <label>1</label>
    </ligand>
</feature>
<feature type="binding site" evidence="1">
    <location>
        <position position="109"/>
    </location>
    <ligand>
        <name>[4Fe-4S] cluster</name>
        <dbReference type="ChEBI" id="CHEBI:49883"/>
        <label>1</label>
    </ligand>
</feature>
<feature type="binding site" evidence="1">
    <location>
        <position position="115"/>
    </location>
    <ligand>
        <name>[4Fe-4S] cluster</name>
        <dbReference type="ChEBI" id="CHEBI:49883"/>
        <label>1</label>
    </ligand>
</feature>
<feature type="binding site" evidence="1">
    <location>
        <position position="135"/>
    </location>
    <ligand>
        <name>[4Fe-4S] cluster</name>
        <dbReference type="ChEBI" id="CHEBI:49883"/>
        <label>2</label>
        <note>4Fe-4S-S-AdoMet</note>
    </ligand>
</feature>
<feature type="binding site" evidence="1">
    <location>
        <position position="139"/>
    </location>
    <ligand>
        <name>[4Fe-4S] cluster</name>
        <dbReference type="ChEBI" id="CHEBI:49883"/>
        <label>2</label>
        <note>4Fe-4S-S-AdoMet</note>
    </ligand>
</feature>
<feature type="binding site" evidence="1">
    <location>
        <position position="142"/>
    </location>
    <ligand>
        <name>[4Fe-4S] cluster</name>
        <dbReference type="ChEBI" id="CHEBI:49883"/>
        <label>2</label>
        <note>4Fe-4S-S-AdoMet</note>
    </ligand>
</feature>
<feature type="binding site" evidence="1">
    <location>
        <position position="350"/>
    </location>
    <ligand>
        <name>[4Fe-4S] cluster</name>
        <dbReference type="ChEBI" id="CHEBI:49883"/>
        <label>1</label>
    </ligand>
</feature>
<proteinExistence type="inferred from homology"/>
<reference key="1">
    <citation type="journal article" date="2004" name="Nature">
        <title>Genome evolution in yeasts.</title>
        <authorList>
            <person name="Dujon B."/>
            <person name="Sherman D."/>
            <person name="Fischer G."/>
            <person name="Durrens P."/>
            <person name="Casaregola S."/>
            <person name="Lafontaine I."/>
            <person name="de Montigny J."/>
            <person name="Marck C."/>
            <person name="Neuveglise C."/>
            <person name="Talla E."/>
            <person name="Goffard N."/>
            <person name="Frangeul L."/>
            <person name="Aigle M."/>
            <person name="Anthouard V."/>
            <person name="Babour A."/>
            <person name="Barbe V."/>
            <person name="Barnay S."/>
            <person name="Blanchin S."/>
            <person name="Beckerich J.-M."/>
            <person name="Beyne E."/>
            <person name="Bleykasten C."/>
            <person name="Boisrame A."/>
            <person name="Boyer J."/>
            <person name="Cattolico L."/>
            <person name="Confanioleri F."/>
            <person name="de Daruvar A."/>
            <person name="Despons L."/>
            <person name="Fabre E."/>
            <person name="Fairhead C."/>
            <person name="Ferry-Dumazet H."/>
            <person name="Groppi A."/>
            <person name="Hantraye F."/>
            <person name="Hennequin C."/>
            <person name="Jauniaux N."/>
            <person name="Joyet P."/>
            <person name="Kachouri R."/>
            <person name="Kerrest A."/>
            <person name="Koszul R."/>
            <person name="Lemaire M."/>
            <person name="Lesur I."/>
            <person name="Ma L."/>
            <person name="Muller H."/>
            <person name="Nicaud J.-M."/>
            <person name="Nikolski M."/>
            <person name="Oztas S."/>
            <person name="Ozier-Kalogeropoulos O."/>
            <person name="Pellenz S."/>
            <person name="Potier S."/>
            <person name="Richard G.-F."/>
            <person name="Straub M.-L."/>
            <person name="Suleau A."/>
            <person name="Swennen D."/>
            <person name="Tekaia F."/>
            <person name="Wesolowski-Louvel M."/>
            <person name="Westhof E."/>
            <person name="Wirth B."/>
            <person name="Zeniou-Meyer M."/>
            <person name="Zivanovic Y."/>
            <person name="Bolotin-Fukuhara M."/>
            <person name="Thierry A."/>
            <person name="Bouchier C."/>
            <person name="Caudron B."/>
            <person name="Scarpelli C."/>
            <person name="Gaillardin C."/>
            <person name="Weissenbach J."/>
            <person name="Wincker P."/>
            <person name="Souciet J.-L."/>
        </authorList>
    </citation>
    <scope>NUCLEOTIDE SEQUENCE [LARGE SCALE GENOMIC DNA]</scope>
    <source>
        <strain>ATCC 8585 / CBS 2359 / DSM 70799 / NBRC 1267 / NRRL Y-1140 / WM37</strain>
    </source>
</reference>
<accession>Q6CLS2</accession>
<gene>
    <name type="ordered locus">KLLA0F00836g</name>
</gene>
<name>LIPA_KLULA</name>
<dbReference type="EC" id="2.8.1.8" evidence="1"/>
<dbReference type="EMBL" id="CR382126">
    <property type="protein sequence ID" value="CAG97824.1"/>
    <property type="molecule type" value="Genomic_DNA"/>
</dbReference>
<dbReference type="RefSeq" id="XP_455117.1">
    <property type="nucleotide sequence ID" value="XM_455117.1"/>
</dbReference>
<dbReference type="SMR" id="Q6CLS2"/>
<dbReference type="FunCoup" id="Q6CLS2">
    <property type="interactions" value="598"/>
</dbReference>
<dbReference type="STRING" id="284590.Q6CLS2"/>
<dbReference type="PaxDb" id="284590-Q6CLS2"/>
<dbReference type="KEGG" id="kla:KLLA0_F00836g"/>
<dbReference type="eggNOG" id="KOG2672">
    <property type="taxonomic scope" value="Eukaryota"/>
</dbReference>
<dbReference type="HOGENOM" id="CLU_033144_2_0_1"/>
<dbReference type="InParanoid" id="Q6CLS2"/>
<dbReference type="OMA" id="PYCDIDF"/>
<dbReference type="UniPathway" id="UPA00538">
    <property type="reaction ID" value="UER00593"/>
</dbReference>
<dbReference type="Proteomes" id="UP000000598">
    <property type="component" value="Chromosome F"/>
</dbReference>
<dbReference type="GO" id="GO:0005739">
    <property type="term" value="C:mitochondrion"/>
    <property type="evidence" value="ECO:0007669"/>
    <property type="project" value="UniProtKB-SubCell"/>
</dbReference>
<dbReference type="GO" id="GO:0051539">
    <property type="term" value="F:4 iron, 4 sulfur cluster binding"/>
    <property type="evidence" value="ECO:0007669"/>
    <property type="project" value="UniProtKB-UniRule"/>
</dbReference>
<dbReference type="GO" id="GO:0016992">
    <property type="term" value="F:lipoate synthase activity"/>
    <property type="evidence" value="ECO:0007669"/>
    <property type="project" value="UniProtKB-UniRule"/>
</dbReference>
<dbReference type="GO" id="GO:0046872">
    <property type="term" value="F:metal ion binding"/>
    <property type="evidence" value="ECO:0007669"/>
    <property type="project" value="UniProtKB-KW"/>
</dbReference>
<dbReference type="CDD" id="cd01335">
    <property type="entry name" value="Radical_SAM"/>
    <property type="match status" value="1"/>
</dbReference>
<dbReference type="FunFam" id="3.20.20.70:FF:000036">
    <property type="entry name" value="Lipoyl synthase, mitochondrial"/>
    <property type="match status" value="1"/>
</dbReference>
<dbReference type="Gene3D" id="3.20.20.70">
    <property type="entry name" value="Aldolase class I"/>
    <property type="match status" value="1"/>
</dbReference>
<dbReference type="HAMAP" id="MF_00206">
    <property type="entry name" value="Lipoyl_synth"/>
    <property type="match status" value="1"/>
</dbReference>
<dbReference type="InterPro" id="IPR013785">
    <property type="entry name" value="Aldolase_TIM"/>
</dbReference>
<dbReference type="InterPro" id="IPR006638">
    <property type="entry name" value="Elp3/MiaA/NifB-like_rSAM"/>
</dbReference>
<dbReference type="InterPro" id="IPR031691">
    <property type="entry name" value="LIAS_N"/>
</dbReference>
<dbReference type="InterPro" id="IPR003698">
    <property type="entry name" value="Lipoyl_synth"/>
</dbReference>
<dbReference type="InterPro" id="IPR007197">
    <property type="entry name" value="rSAM"/>
</dbReference>
<dbReference type="NCBIfam" id="TIGR00510">
    <property type="entry name" value="lipA"/>
    <property type="match status" value="1"/>
</dbReference>
<dbReference type="NCBIfam" id="NF004019">
    <property type="entry name" value="PRK05481.1"/>
    <property type="match status" value="1"/>
</dbReference>
<dbReference type="NCBIfam" id="NF009544">
    <property type="entry name" value="PRK12928.1"/>
    <property type="match status" value="1"/>
</dbReference>
<dbReference type="PANTHER" id="PTHR10949">
    <property type="entry name" value="LIPOYL SYNTHASE"/>
    <property type="match status" value="1"/>
</dbReference>
<dbReference type="PANTHER" id="PTHR10949:SF0">
    <property type="entry name" value="LIPOYL SYNTHASE, MITOCHONDRIAL"/>
    <property type="match status" value="1"/>
</dbReference>
<dbReference type="Pfam" id="PF16881">
    <property type="entry name" value="LIAS_N"/>
    <property type="match status" value="1"/>
</dbReference>
<dbReference type="Pfam" id="PF04055">
    <property type="entry name" value="Radical_SAM"/>
    <property type="match status" value="1"/>
</dbReference>
<dbReference type="PIRSF" id="PIRSF005963">
    <property type="entry name" value="Lipoyl_synth"/>
    <property type="match status" value="1"/>
</dbReference>
<dbReference type="SFLD" id="SFLDF00271">
    <property type="entry name" value="lipoyl_synthase"/>
    <property type="match status" value="1"/>
</dbReference>
<dbReference type="SFLD" id="SFLDG01058">
    <property type="entry name" value="lipoyl_synthase_like"/>
    <property type="match status" value="1"/>
</dbReference>
<dbReference type="SMART" id="SM00729">
    <property type="entry name" value="Elp3"/>
    <property type="match status" value="1"/>
</dbReference>
<dbReference type="SUPFAM" id="SSF102114">
    <property type="entry name" value="Radical SAM enzymes"/>
    <property type="match status" value="1"/>
</dbReference>
<dbReference type="PROSITE" id="PS51918">
    <property type="entry name" value="RADICAL_SAM"/>
    <property type="match status" value="1"/>
</dbReference>
<protein>
    <recommendedName>
        <fullName evidence="1">Lipoyl synthase, mitochondrial</fullName>
        <ecNumber evidence="1">2.8.1.8</ecNumber>
    </recommendedName>
    <alternativeName>
        <fullName evidence="1">Lipoate synthase</fullName>
        <shortName evidence="1">LS</shortName>
        <shortName evidence="1">Lip-syn</shortName>
    </alternativeName>
    <alternativeName>
        <fullName evidence="1">Lipoic acid synthase</fullName>
    </alternativeName>
</protein>